<comment type="function">
    <text evidence="1">The RecF protein is involved in DNA metabolism; it is required for DNA replication and normal SOS inducibility. RecF binds preferentially to single-stranded, linear DNA. It also seems to bind ATP.</text>
</comment>
<comment type="subcellular location">
    <subcellularLocation>
        <location evidence="1">Cytoplasm</location>
    </subcellularLocation>
</comment>
<comment type="similarity">
    <text evidence="1">Belongs to the RecF family.</text>
</comment>
<dbReference type="EMBL" id="CP001083">
    <property type="protein sequence ID" value="ACQ52313.1"/>
    <property type="molecule type" value="Genomic_DNA"/>
</dbReference>
<dbReference type="RefSeq" id="WP_003361830.1">
    <property type="nucleotide sequence ID" value="NC_012658.1"/>
</dbReference>
<dbReference type="SMR" id="C3KXR0"/>
<dbReference type="KEGG" id="cbi:CLJ_B0004"/>
<dbReference type="HOGENOM" id="CLU_040267_0_1_9"/>
<dbReference type="Proteomes" id="UP000002333">
    <property type="component" value="Chromosome"/>
</dbReference>
<dbReference type="GO" id="GO:0005737">
    <property type="term" value="C:cytoplasm"/>
    <property type="evidence" value="ECO:0007669"/>
    <property type="project" value="UniProtKB-SubCell"/>
</dbReference>
<dbReference type="GO" id="GO:0005524">
    <property type="term" value="F:ATP binding"/>
    <property type="evidence" value="ECO:0007669"/>
    <property type="project" value="UniProtKB-UniRule"/>
</dbReference>
<dbReference type="GO" id="GO:0003697">
    <property type="term" value="F:single-stranded DNA binding"/>
    <property type="evidence" value="ECO:0007669"/>
    <property type="project" value="UniProtKB-UniRule"/>
</dbReference>
<dbReference type="GO" id="GO:0006260">
    <property type="term" value="P:DNA replication"/>
    <property type="evidence" value="ECO:0007669"/>
    <property type="project" value="UniProtKB-UniRule"/>
</dbReference>
<dbReference type="GO" id="GO:0000731">
    <property type="term" value="P:DNA synthesis involved in DNA repair"/>
    <property type="evidence" value="ECO:0007669"/>
    <property type="project" value="TreeGrafter"/>
</dbReference>
<dbReference type="GO" id="GO:0006302">
    <property type="term" value="P:double-strand break repair"/>
    <property type="evidence" value="ECO:0007669"/>
    <property type="project" value="TreeGrafter"/>
</dbReference>
<dbReference type="GO" id="GO:0009432">
    <property type="term" value="P:SOS response"/>
    <property type="evidence" value="ECO:0007669"/>
    <property type="project" value="UniProtKB-UniRule"/>
</dbReference>
<dbReference type="CDD" id="cd03242">
    <property type="entry name" value="ABC_RecF"/>
    <property type="match status" value="1"/>
</dbReference>
<dbReference type="Gene3D" id="3.40.50.300">
    <property type="entry name" value="P-loop containing nucleotide triphosphate hydrolases"/>
    <property type="match status" value="1"/>
</dbReference>
<dbReference type="Gene3D" id="1.20.1050.90">
    <property type="entry name" value="RecF/RecN/SMC, N-terminal domain"/>
    <property type="match status" value="1"/>
</dbReference>
<dbReference type="HAMAP" id="MF_00365">
    <property type="entry name" value="RecF"/>
    <property type="match status" value="1"/>
</dbReference>
<dbReference type="InterPro" id="IPR001238">
    <property type="entry name" value="DNA-binding_RecF"/>
</dbReference>
<dbReference type="InterPro" id="IPR018078">
    <property type="entry name" value="DNA-binding_RecF_CS"/>
</dbReference>
<dbReference type="InterPro" id="IPR027417">
    <property type="entry name" value="P-loop_NTPase"/>
</dbReference>
<dbReference type="InterPro" id="IPR003395">
    <property type="entry name" value="RecF/RecN/SMC_N"/>
</dbReference>
<dbReference type="InterPro" id="IPR042174">
    <property type="entry name" value="RecF_2"/>
</dbReference>
<dbReference type="NCBIfam" id="TIGR00611">
    <property type="entry name" value="recf"/>
    <property type="match status" value="1"/>
</dbReference>
<dbReference type="PANTHER" id="PTHR32182">
    <property type="entry name" value="DNA REPLICATION AND REPAIR PROTEIN RECF"/>
    <property type="match status" value="1"/>
</dbReference>
<dbReference type="PANTHER" id="PTHR32182:SF0">
    <property type="entry name" value="DNA REPLICATION AND REPAIR PROTEIN RECF"/>
    <property type="match status" value="1"/>
</dbReference>
<dbReference type="Pfam" id="PF02463">
    <property type="entry name" value="SMC_N"/>
    <property type="match status" value="1"/>
</dbReference>
<dbReference type="SUPFAM" id="SSF52540">
    <property type="entry name" value="P-loop containing nucleoside triphosphate hydrolases"/>
    <property type="match status" value="1"/>
</dbReference>
<dbReference type="PROSITE" id="PS00617">
    <property type="entry name" value="RECF_1"/>
    <property type="match status" value="1"/>
</dbReference>
<dbReference type="PROSITE" id="PS00618">
    <property type="entry name" value="RECF_2"/>
    <property type="match status" value="1"/>
</dbReference>
<gene>
    <name evidence="1" type="primary">recF</name>
    <name type="ordered locus">CLJ_B0004</name>
</gene>
<organism>
    <name type="scientific">Clostridium botulinum (strain 657 / Type Ba4)</name>
    <dbReference type="NCBI Taxonomy" id="515621"/>
    <lineage>
        <taxon>Bacteria</taxon>
        <taxon>Bacillati</taxon>
        <taxon>Bacillota</taxon>
        <taxon>Clostridia</taxon>
        <taxon>Eubacteriales</taxon>
        <taxon>Clostridiaceae</taxon>
        <taxon>Clostridium</taxon>
    </lineage>
</organism>
<sequence length="364" mass="42775">MYIKNVHLINFRNYDDMYLELSPNTNIFVGNNAQGKTNILESIYYSSIGKSHRTNKDKDLIKWDKNNTYLRTYVSRERLDKTIDINIFKNGKKAITVNKIKIKKISELMGNLNVVMFSPEDLRIIKDSPGNRRKFLDIELCKINNVYYHDLVQYNKILSERNTALKNWNNKINDIIDIYDEQLSKYGAFIIKERNKYLDKLNIIGKNIHKKITNDLEDINFRYLTNIKDFDNAEKELLMFFKKNRKKDFERNSTSIGPHRDDFEVSINNIDTRIFGSQGQQRTAVLTLKFASLEIIKNIIGEYPVLLLDDVLSELDSNRQKFVLNSIDKIQTIITCTGIEEIDKYLDKKQSQLYLVNNGKIKRV</sequence>
<reference key="1">
    <citation type="submission" date="2008-05" db="EMBL/GenBank/DDBJ databases">
        <title>Genome sequence of Clostridium botulinum Ba4 strain 657.</title>
        <authorList>
            <person name="Shrivastava S."/>
            <person name="Brown J.L."/>
            <person name="Bruce D."/>
            <person name="Detter C."/>
            <person name="Munk C."/>
            <person name="Smith L.A."/>
            <person name="Smith T.J."/>
            <person name="Sutton G."/>
            <person name="Brettin T.S."/>
        </authorList>
    </citation>
    <scope>NUCLEOTIDE SEQUENCE [LARGE SCALE GENOMIC DNA]</scope>
    <source>
        <strain>657 / Type Ba4</strain>
    </source>
</reference>
<proteinExistence type="inferred from homology"/>
<name>RECF_CLOB6</name>
<protein>
    <recommendedName>
        <fullName evidence="1">DNA replication and repair protein RecF</fullName>
    </recommendedName>
</protein>
<feature type="chain" id="PRO_1000205477" description="DNA replication and repair protein RecF">
    <location>
        <begin position="1"/>
        <end position="364"/>
    </location>
</feature>
<feature type="binding site" evidence="1">
    <location>
        <begin position="30"/>
        <end position="37"/>
    </location>
    <ligand>
        <name>ATP</name>
        <dbReference type="ChEBI" id="CHEBI:30616"/>
    </ligand>
</feature>
<accession>C3KXR0</accession>
<keyword id="KW-0067">ATP-binding</keyword>
<keyword id="KW-0963">Cytoplasm</keyword>
<keyword id="KW-0227">DNA damage</keyword>
<keyword id="KW-0234">DNA repair</keyword>
<keyword id="KW-0235">DNA replication</keyword>
<keyword id="KW-0238">DNA-binding</keyword>
<keyword id="KW-0547">Nucleotide-binding</keyword>
<keyword id="KW-0742">SOS response</keyword>
<evidence type="ECO:0000255" key="1">
    <source>
        <dbReference type="HAMAP-Rule" id="MF_00365"/>
    </source>
</evidence>